<dbReference type="EC" id="2.2.1.2" evidence="1"/>
<dbReference type="EMBL" id="CP001099">
    <property type="protein sequence ID" value="ACF12429.1"/>
    <property type="molecule type" value="Genomic_DNA"/>
</dbReference>
<dbReference type="RefSeq" id="WP_012503262.1">
    <property type="nucleotide sequence ID" value="NC_011027.1"/>
</dbReference>
<dbReference type="SMR" id="B3QLU3"/>
<dbReference type="STRING" id="517417.Cpar_2042"/>
<dbReference type="KEGG" id="cpc:Cpar_2042"/>
<dbReference type="eggNOG" id="COG0176">
    <property type="taxonomic scope" value="Bacteria"/>
</dbReference>
<dbReference type="HOGENOM" id="CLU_079764_0_0_10"/>
<dbReference type="OrthoDB" id="9807051at2"/>
<dbReference type="UniPathway" id="UPA00115">
    <property type="reaction ID" value="UER00414"/>
</dbReference>
<dbReference type="Proteomes" id="UP000008811">
    <property type="component" value="Chromosome"/>
</dbReference>
<dbReference type="GO" id="GO:0005737">
    <property type="term" value="C:cytoplasm"/>
    <property type="evidence" value="ECO:0007669"/>
    <property type="project" value="UniProtKB-SubCell"/>
</dbReference>
<dbReference type="GO" id="GO:0016832">
    <property type="term" value="F:aldehyde-lyase activity"/>
    <property type="evidence" value="ECO:0007669"/>
    <property type="project" value="InterPro"/>
</dbReference>
<dbReference type="GO" id="GO:0004801">
    <property type="term" value="F:transaldolase activity"/>
    <property type="evidence" value="ECO:0007669"/>
    <property type="project" value="UniProtKB-UniRule"/>
</dbReference>
<dbReference type="GO" id="GO:0005975">
    <property type="term" value="P:carbohydrate metabolic process"/>
    <property type="evidence" value="ECO:0007669"/>
    <property type="project" value="InterPro"/>
</dbReference>
<dbReference type="GO" id="GO:0006098">
    <property type="term" value="P:pentose-phosphate shunt"/>
    <property type="evidence" value="ECO:0007669"/>
    <property type="project" value="UniProtKB-UniRule"/>
</dbReference>
<dbReference type="CDD" id="cd00956">
    <property type="entry name" value="Transaldolase_FSA"/>
    <property type="match status" value="1"/>
</dbReference>
<dbReference type="FunFam" id="3.20.20.70:FF:000018">
    <property type="entry name" value="Probable transaldolase"/>
    <property type="match status" value="1"/>
</dbReference>
<dbReference type="Gene3D" id="3.20.20.70">
    <property type="entry name" value="Aldolase class I"/>
    <property type="match status" value="1"/>
</dbReference>
<dbReference type="HAMAP" id="MF_00494">
    <property type="entry name" value="Transaldolase_3b"/>
    <property type="match status" value="1"/>
</dbReference>
<dbReference type="InterPro" id="IPR013785">
    <property type="entry name" value="Aldolase_TIM"/>
</dbReference>
<dbReference type="InterPro" id="IPR001585">
    <property type="entry name" value="TAL/FSA"/>
</dbReference>
<dbReference type="InterPro" id="IPR022999">
    <property type="entry name" value="Transaldolase_3B"/>
</dbReference>
<dbReference type="InterPro" id="IPR004731">
    <property type="entry name" value="Transaldolase_3B/F6P_aldolase"/>
</dbReference>
<dbReference type="InterPro" id="IPR018225">
    <property type="entry name" value="Transaldolase_AS"/>
</dbReference>
<dbReference type="InterPro" id="IPR033919">
    <property type="entry name" value="TSA/FSA_arc/bac"/>
</dbReference>
<dbReference type="NCBIfam" id="TIGR00875">
    <property type="entry name" value="fsa_talC_mipB"/>
    <property type="match status" value="1"/>
</dbReference>
<dbReference type="PANTHER" id="PTHR10683:SF40">
    <property type="entry name" value="FRUCTOSE-6-PHOSPHATE ALDOLASE 1-RELATED"/>
    <property type="match status" value="1"/>
</dbReference>
<dbReference type="PANTHER" id="PTHR10683">
    <property type="entry name" value="TRANSALDOLASE"/>
    <property type="match status" value="1"/>
</dbReference>
<dbReference type="Pfam" id="PF00923">
    <property type="entry name" value="TAL_FSA"/>
    <property type="match status" value="1"/>
</dbReference>
<dbReference type="SUPFAM" id="SSF51569">
    <property type="entry name" value="Aldolase"/>
    <property type="match status" value="1"/>
</dbReference>
<dbReference type="PROSITE" id="PS01054">
    <property type="entry name" value="TRANSALDOLASE_1"/>
    <property type="match status" value="1"/>
</dbReference>
<reference key="1">
    <citation type="submission" date="2008-06" db="EMBL/GenBank/DDBJ databases">
        <title>Complete sequence of Chlorobaculum parvum NCIB 8327.</title>
        <authorList>
            <consortium name="US DOE Joint Genome Institute"/>
            <person name="Lucas S."/>
            <person name="Copeland A."/>
            <person name="Lapidus A."/>
            <person name="Glavina del Rio T."/>
            <person name="Dalin E."/>
            <person name="Tice H."/>
            <person name="Bruce D."/>
            <person name="Goodwin L."/>
            <person name="Pitluck S."/>
            <person name="Schmutz J."/>
            <person name="Larimer F."/>
            <person name="Land M."/>
            <person name="Hauser L."/>
            <person name="Kyrpides N."/>
            <person name="Mikhailova N."/>
            <person name="Zhao F."/>
            <person name="Li T."/>
            <person name="Liu Z."/>
            <person name="Overmann J."/>
            <person name="Bryant D.A."/>
            <person name="Richardson P."/>
        </authorList>
    </citation>
    <scope>NUCLEOTIDE SEQUENCE [LARGE SCALE GENOMIC DNA]</scope>
    <source>
        <strain>DSM 263 / NCIMB 8327</strain>
    </source>
</reference>
<comment type="function">
    <text evidence="1">Transaldolase is important for the balance of metabolites in the pentose-phosphate pathway.</text>
</comment>
<comment type="catalytic activity">
    <reaction evidence="1">
        <text>D-sedoheptulose 7-phosphate + D-glyceraldehyde 3-phosphate = D-erythrose 4-phosphate + beta-D-fructose 6-phosphate</text>
        <dbReference type="Rhea" id="RHEA:17053"/>
        <dbReference type="ChEBI" id="CHEBI:16897"/>
        <dbReference type="ChEBI" id="CHEBI:57483"/>
        <dbReference type="ChEBI" id="CHEBI:57634"/>
        <dbReference type="ChEBI" id="CHEBI:59776"/>
        <dbReference type="EC" id="2.2.1.2"/>
    </reaction>
</comment>
<comment type="pathway">
    <text evidence="1">Carbohydrate degradation; pentose phosphate pathway; D-glyceraldehyde 3-phosphate and beta-D-fructose 6-phosphate from D-ribose 5-phosphate and D-xylulose 5-phosphate (non-oxidative stage): step 2/3.</text>
</comment>
<comment type="subcellular location">
    <subcellularLocation>
        <location evidence="1">Cytoplasm</location>
    </subcellularLocation>
</comment>
<comment type="similarity">
    <text evidence="1">Belongs to the transaldolase family. Type 3B subfamily.</text>
</comment>
<keyword id="KW-0963">Cytoplasm</keyword>
<keyword id="KW-0570">Pentose shunt</keyword>
<keyword id="KW-0704">Schiff base</keyword>
<keyword id="KW-0808">Transferase</keyword>
<sequence length="222" mass="23862">MKFFIDTASLDEIKAANELGVLDGVTTNPSLIAKIVKDPANFTYADFKAHIKKICDIVDGPVSAEVTTLKAEEMIAQGEELAAIHENVVIKCPLTVEGLKAIKHFSSNGIKTNATLVFSPTQALLAAKAGADFVSPFVGRLDDISTNGMELVKQIVTIYDNYGYLTEVIVASVRNPLHVVESAMVGADIATIPYSVIKQLANHPLTDKGLEKFMEDAGVMKP</sequence>
<feature type="chain" id="PRO_1000126288" description="Probable transaldolase">
    <location>
        <begin position="1"/>
        <end position="222"/>
    </location>
</feature>
<feature type="active site" description="Schiff-base intermediate with substrate" evidence="1">
    <location>
        <position position="91"/>
    </location>
</feature>
<accession>B3QLU3</accession>
<gene>
    <name evidence="1" type="primary">tal</name>
    <name type="ordered locus">Cpar_2042</name>
</gene>
<organism>
    <name type="scientific">Chlorobaculum parvum (strain DSM 263 / NCIMB 8327)</name>
    <name type="common">Chlorobium vibrioforme subsp. thiosulfatophilum</name>
    <dbReference type="NCBI Taxonomy" id="517417"/>
    <lineage>
        <taxon>Bacteria</taxon>
        <taxon>Pseudomonadati</taxon>
        <taxon>Chlorobiota</taxon>
        <taxon>Chlorobiia</taxon>
        <taxon>Chlorobiales</taxon>
        <taxon>Chlorobiaceae</taxon>
        <taxon>Chlorobaculum</taxon>
    </lineage>
</organism>
<protein>
    <recommendedName>
        <fullName evidence="1">Probable transaldolase</fullName>
        <ecNumber evidence="1">2.2.1.2</ecNumber>
    </recommendedName>
</protein>
<evidence type="ECO:0000255" key="1">
    <source>
        <dbReference type="HAMAP-Rule" id="MF_00494"/>
    </source>
</evidence>
<name>TAL_CHLP8</name>
<proteinExistence type="inferred from homology"/>